<feature type="peptide" id="PRO_0000378698" description="Pyrokinin-5" evidence="3">
    <location>
        <begin position="1"/>
        <end position="17"/>
    </location>
</feature>
<feature type="modified residue" description="Leucine amide" evidence="3">
    <location>
        <position position="17"/>
    </location>
</feature>
<accession>P85650</accession>
<keyword id="KW-0027">Amidation</keyword>
<keyword id="KW-0903">Direct protein sequencing</keyword>
<keyword id="KW-0527">Neuropeptide</keyword>
<keyword id="KW-0964">Secreted</keyword>
<organism>
    <name type="scientific">Gyna lurida</name>
    <name type="common">Porcelain cockroach</name>
    <dbReference type="NCBI Taxonomy" id="406578"/>
    <lineage>
        <taxon>Eukaryota</taxon>
        <taxon>Metazoa</taxon>
        <taxon>Ecdysozoa</taxon>
        <taxon>Arthropoda</taxon>
        <taxon>Hexapoda</taxon>
        <taxon>Insecta</taxon>
        <taxon>Pterygota</taxon>
        <taxon>Neoptera</taxon>
        <taxon>Polyneoptera</taxon>
        <taxon>Dictyoptera</taxon>
        <taxon>Blattodea</taxon>
        <taxon>Blaberoidea</taxon>
        <taxon>Blaberidae</taxon>
        <taxon>Gyninae</taxon>
        <taxon>Gyna</taxon>
    </lineage>
</organism>
<dbReference type="GO" id="GO:0005576">
    <property type="term" value="C:extracellular region"/>
    <property type="evidence" value="ECO:0007669"/>
    <property type="project" value="UniProtKB-SubCell"/>
</dbReference>
<dbReference type="GO" id="GO:0005184">
    <property type="term" value="F:neuropeptide hormone activity"/>
    <property type="evidence" value="ECO:0007669"/>
    <property type="project" value="InterPro"/>
</dbReference>
<dbReference type="GO" id="GO:0007218">
    <property type="term" value="P:neuropeptide signaling pathway"/>
    <property type="evidence" value="ECO:0007669"/>
    <property type="project" value="UniProtKB-KW"/>
</dbReference>
<dbReference type="InterPro" id="IPR001484">
    <property type="entry name" value="Pyrokinin_CS"/>
</dbReference>
<dbReference type="PROSITE" id="PS00539">
    <property type="entry name" value="PYROKININ"/>
    <property type="match status" value="1"/>
</dbReference>
<comment type="function">
    <text evidence="1">Myoactive.</text>
</comment>
<comment type="subcellular location">
    <subcellularLocation>
        <location evidence="5">Secreted</location>
    </subcellularLocation>
</comment>
<comment type="similarity">
    <text evidence="2">Belongs to the pyrokinin family.</text>
</comment>
<evidence type="ECO:0000250" key="1">
    <source>
        <dbReference type="UniProtKB" id="P82617"/>
    </source>
</evidence>
<evidence type="ECO:0000255" key="2"/>
<evidence type="ECO:0000269" key="3">
    <source>
    </source>
</evidence>
<evidence type="ECO:0000303" key="4">
    <source>
    </source>
</evidence>
<evidence type="ECO:0000305" key="5"/>
<reference evidence="5" key="1">
    <citation type="journal article" date="2009" name="BMC Evol. Biol.">
        <title>A proteomic approach for studying insect phylogeny: CAPA peptides of ancient insect taxa (Dictyoptera, Blattoptera) as a test case.</title>
        <authorList>
            <person name="Roth S."/>
            <person name="Fromm B."/>
            <person name="Gaede G."/>
            <person name="Predel R."/>
        </authorList>
    </citation>
    <scope>PROTEIN SEQUENCE</scope>
    <scope>AMIDATION AT LEU-17</scope>
    <source>
        <tissue evidence="3">Abdominal perisympathetic organs</tissue>
    </source>
</reference>
<sequence>AGDTSSEAKGMWFGPRL</sequence>
<protein>
    <recommendedName>
        <fullName evidence="1">Pyrokinin-5</fullName>
    </recommendedName>
    <alternativeName>
        <fullName evidence="1">FXPRL-amide</fullName>
    </alternativeName>
    <alternativeName>
        <fullName evidence="4">GynLu-Capa-PK</fullName>
    </alternativeName>
</protein>
<proteinExistence type="evidence at protein level"/>
<name>PPK5_GYNLU</name>